<accession>O81148</accession>
<accession>O23711</accession>
<sequence>MSRRYDSRTTIFSPEGRLYQVEYAMEAIGNAGSAIGILSKDGVVLIGEKKVTSKLLQTSTSAEKMYKIDDHVACAVAGIMSDANILINTARVQAQRYTFMYQEPMPVEQLVQSLCDTKQGYTQFGGLRPFGVSFLFAGWDKHHGFQLYMSDPSGNYGGWKAAAVGANNQAAQSILKQDYKDDATREEAVELALKVLTKTMDSTSLTSEKLELAEVYLTPSKTVKYHVHSPESLTKLLVKHGVTQPAAETS</sequence>
<protein>
    <recommendedName>
        <fullName>Proteasome subunit alpha type-4-A</fullName>
    </recommendedName>
    <alternativeName>
        <fullName>20S proteasome alpha subunit C-1</fullName>
    </alternativeName>
    <alternativeName>
        <fullName>Proteasome 27 kDa subunit</fullName>
    </alternativeName>
    <alternativeName>
        <fullName>Proteasome component 9</fullName>
    </alternativeName>
    <alternativeName>
        <fullName>Proteasome subunit alpha type-3</fullName>
    </alternativeName>
</protein>
<feature type="chain" id="PRO_0000124111" description="Proteasome subunit alpha type-4-A">
    <location>
        <begin position="1"/>
        <end position="250"/>
    </location>
</feature>
<feature type="cross-link" description="Glycyl lysine isopeptide (Lys-Gly) (interchain with G-Cter in ubiquitin)" evidence="6">
    <location>
        <position position="40"/>
    </location>
</feature>
<feature type="cross-link" description="Glycyl lysine isopeptide (Lys-Gly) (interchain with G-Cter in ubiquitin)" evidence="2">
    <location>
        <position position="64"/>
    </location>
</feature>
<feature type="sequence conflict" description="In Ref. 1; CAA73624." evidence="8" ref="1">
    <original>A</original>
    <variation>V</variation>
    <location>
        <position position="24"/>
    </location>
</feature>
<keyword id="KW-0963">Cytoplasm</keyword>
<keyword id="KW-1017">Isopeptide bond</keyword>
<keyword id="KW-0539">Nucleus</keyword>
<keyword id="KW-0647">Proteasome</keyword>
<keyword id="KW-1185">Reference proteome</keyword>
<keyword id="KW-0832">Ubl conjugation</keyword>
<organism>
    <name type="scientific">Arabidopsis thaliana</name>
    <name type="common">Mouse-ear cress</name>
    <dbReference type="NCBI Taxonomy" id="3702"/>
    <lineage>
        <taxon>Eukaryota</taxon>
        <taxon>Viridiplantae</taxon>
        <taxon>Streptophyta</taxon>
        <taxon>Embryophyta</taxon>
        <taxon>Tracheophyta</taxon>
        <taxon>Spermatophyta</taxon>
        <taxon>Magnoliopsida</taxon>
        <taxon>eudicotyledons</taxon>
        <taxon>Gunneridae</taxon>
        <taxon>Pentapetalae</taxon>
        <taxon>rosids</taxon>
        <taxon>malvids</taxon>
        <taxon>Brassicales</taxon>
        <taxon>Brassicaceae</taxon>
        <taxon>Camelineae</taxon>
        <taxon>Arabidopsis</taxon>
    </lineage>
</organism>
<proteinExistence type="evidence at protein level"/>
<gene>
    <name type="primary">PAC1</name>
    <name type="synonym">PRC9</name>
    <name type="synonym">PRS1</name>
    <name type="ordered locus">At3g22110</name>
    <name type="ORF">MKA23.2</name>
</gene>
<evidence type="ECO:0000250" key="1"/>
<evidence type="ECO:0000250" key="2">
    <source>
        <dbReference type="UniProtKB" id="O81149"/>
    </source>
</evidence>
<evidence type="ECO:0000255" key="3">
    <source>
        <dbReference type="PROSITE-ProRule" id="PRU00808"/>
    </source>
</evidence>
<evidence type="ECO:0000269" key="4">
    <source>
    </source>
</evidence>
<evidence type="ECO:0000269" key="5">
    <source>
    </source>
</evidence>
<evidence type="ECO:0000269" key="6">
    <source>
    </source>
</evidence>
<evidence type="ECO:0000269" key="7">
    <source>
    </source>
</evidence>
<evidence type="ECO:0000305" key="8"/>
<comment type="function">
    <text>The proteasome is a multicatalytic proteinase complex which is characterized by its ability to cleave peptides with Arg, Phe, Tyr, Leu, and Glu adjacent to the leaving group at neutral or slightly basic pH. The proteasome has an ATP-dependent proteolytic activity.</text>
</comment>
<comment type="subunit">
    <text evidence="4 5 6">Component of the 20S core complex of the 26S proteasome. The 26S proteasome is composed of a core protease (CP), known as the 20S proteasome, capped at one or both ends by the 19S regulatory particle (RP/PA700). The 20S proteasome core is composed of 28 subunits that are arranged in four stacked rings, resulting in a barrel-shaped structure. The two end rings are each formed by seven alpha subunits, and the two central rings are each formed by seven beta subunits. The catalytic chamber with the active sites is on the inside of the barrel.</text>
</comment>
<comment type="subcellular location">
    <subcellularLocation>
        <location evidence="1">Cytoplasm</location>
    </subcellularLocation>
    <subcellularLocation>
        <location evidence="1">Nucleus</location>
    </subcellularLocation>
</comment>
<comment type="tissue specificity">
    <text evidence="7">Ubiquitous low levels, higher expression in siliques and flowers.</text>
</comment>
<comment type="similarity">
    <text evidence="3">Belongs to the peptidase T1A family.</text>
</comment>
<name>PSA4A_ARATH</name>
<dbReference type="EMBL" id="Y13181">
    <property type="protein sequence ID" value="CAA73624.1"/>
    <property type="molecule type" value="mRNA"/>
</dbReference>
<dbReference type="EMBL" id="AF043521">
    <property type="protein sequence ID" value="AAC32057.1"/>
    <property type="molecule type" value="mRNA"/>
</dbReference>
<dbReference type="EMBL" id="AP001306">
    <property type="protein sequence ID" value="BAB03060.1"/>
    <property type="molecule type" value="Genomic_DNA"/>
</dbReference>
<dbReference type="EMBL" id="CP002686">
    <property type="protein sequence ID" value="AEE76591.1"/>
    <property type="molecule type" value="Genomic_DNA"/>
</dbReference>
<dbReference type="EMBL" id="AF386953">
    <property type="protein sequence ID" value="AAK62398.1"/>
    <property type="molecule type" value="mRNA"/>
</dbReference>
<dbReference type="EMBL" id="BT000001">
    <property type="protein sequence ID" value="AAN15320.1"/>
    <property type="molecule type" value="mRNA"/>
</dbReference>
<dbReference type="EMBL" id="AY085914">
    <property type="protein sequence ID" value="AAM63126.1"/>
    <property type="molecule type" value="mRNA"/>
</dbReference>
<dbReference type="PIR" id="T51969">
    <property type="entry name" value="T51969"/>
</dbReference>
<dbReference type="RefSeq" id="NP_188850.1">
    <property type="nucleotide sequence ID" value="NM_113108.5"/>
</dbReference>
<dbReference type="SMR" id="O81148"/>
<dbReference type="BioGRID" id="7106">
    <property type="interactions" value="63"/>
</dbReference>
<dbReference type="FunCoup" id="O81148">
    <property type="interactions" value="4255"/>
</dbReference>
<dbReference type="IntAct" id="O81148">
    <property type="interactions" value="2"/>
</dbReference>
<dbReference type="STRING" id="3702.O81148"/>
<dbReference type="iPTMnet" id="O81148"/>
<dbReference type="MetOSite" id="O81148"/>
<dbReference type="PaxDb" id="3702-AT3G22110.1"/>
<dbReference type="ProteomicsDB" id="226386"/>
<dbReference type="EnsemblPlants" id="AT3G22110.1">
    <property type="protein sequence ID" value="AT3G22110.1"/>
    <property type="gene ID" value="AT3G22110"/>
</dbReference>
<dbReference type="GeneID" id="821774"/>
<dbReference type="Gramene" id="AT3G22110.1">
    <property type="protein sequence ID" value="AT3G22110.1"/>
    <property type="gene ID" value="AT3G22110"/>
</dbReference>
<dbReference type="KEGG" id="ath:AT3G22110"/>
<dbReference type="Araport" id="AT3G22110"/>
<dbReference type="TAIR" id="AT3G22110">
    <property type="gene designation" value="PAC1"/>
</dbReference>
<dbReference type="eggNOG" id="KOG0178">
    <property type="taxonomic scope" value="Eukaryota"/>
</dbReference>
<dbReference type="HOGENOM" id="CLU_035750_4_3_1"/>
<dbReference type="InParanoid" id="O81148"/>
<dbReference type="OMA" id="YVLNDNM"/>
<dbReference type="OrthoDB" id="1054354at2759"/>
<dbReference type="PhylomeDB" id="O81148"/>
<dbReference type="CD-CODE" id="4299E36E">
    <property type="entry name" value="Nucleolus"/>
</dbReference>
<dbReference type="PRO" id="PR:O81148"/>
<dbReference type="Proteomes" id="UP000006548">
    <property type="component" value="Chromosome 3"/>
</dbReference>
<dbReference type="ExpressionAtlas" id="O81148">
    <property type="expression patterns" value="baseline and differential"/>
</dbReference>
<dbReference type="GO" id="GO:0005829">
    <property type="term" value="C:cytosol"/>
    <property type="evidence" value="ECO:0007005"/>
    <property type="project" value="TAIR"/>
</dbReference>
<dbReference type="GO" id="GO:0022626">
    <property type="term" value="C:cytosolic ribosome"/>
    <property type="evidence" value="ECO:0007005"/>
    <property type="project" value="TAIR"/>
</dbReference>
<dbReference type="GO" id="GO:0005739">
    <property type="term" value="C:mitochondrion"/>
    <property type="evidence" value="ECO:0007005"/>
    <property type="project" value="TAIR"/>
</dbReference>
<dbReference type="GO" id="GO:0005634">
    <property type="term" value="C:nucleus"/>
    <property type="evidence" value="ECO:0007669"/>
    <property type="project" value="UniProtKB-SubCell"/>
</dbReference>
<dbReference type="GO" id="GO:0000502">
    <property type="term" value="C:proteasome complex"/>
    <property type="evidence" value="ECO:0000314"/>
    <property type="project" value="TAIR"/>
</dbReference>
<dbReference type="GO" id="GO:0019773">
    <property type="term" value="C:proteasome core complex, alpha-subunit complex"/>
    <property type="evidence" value="ECO:0000250"/>
    <property type="project" value="UniProtKB"/>
</dbReference>
<dbReference type="GO" id="GO:0005773">
    <property type="term" value="C:vacuole"/>
    <property type="evidence" value="ECO:0007005"/>
    <property type="project" value="TAIR"/>
</dbReference>
<dbReference type="GO" id="GO:0006511">
    <property type="term" value="P:ubiquitin-dependent protein catabolic process"/>
    <property type="evidence" value="ECO:0007669"/>
    <property type="project" value="InterPro"/>
</dbReference>
<dbReference type="CDD" id="cd03752">
    <property type="entry name" value="proteasome_alpha_type_4"/>
    <property type="match status" value="1"/>
</dbReference>
<dbReference type="FunFam" id="3.60.20.10:FF:000031">
    <property type="entry name" value="Proteasome subunit alpha type"/>
    <property type="match status" value="1"/>
</dbReference>
<dbReference type="Gene3D" id="3.60.20.10">
    <property type="entry name" value="Glutamine Phosphoribosylpyrophosphate, subunit 1, domain 1"/>
    <property type="match status" value="1"/>
</dbReference>
<dbReference type="InterPro" id="IPR029055">
    <property type="entry name" value="Ntn_hydrolases_N"/>
</dbReference>
<dbReference type="InterPro" id="IPR050115">
    <property type="entry name" value="Proteasome_alpha"/>
</dbReference>
<dbReference type="InterPro" id="IPR023332">
    <property type="entry name" value="Proteasome_alpha-type"/>
</dbReference>
<dbReference type="InterPro" id="IPR000426">
    <property type="entry name" value="Proteasome_asu_N"/>
</dbReference>
<dbReference type="InterPro" id="IPR001353">
    <property type="entry name" value="Proteasome_sua/b"/>
</dbReference>
<dbReference type="NCBIfam" id="NF003075">
    <property type="entry name" value="PRK03996.1"/>
    <property type="match status" value="1"/>
</dbReference>
<dbReference type="PANTHER" id="PTHR11599">
    <property type="entry name" value="PROTEASOME SUBUNIT ALPHA/BETA"/>
    <property type="match status" value="1"/>
</dbReference>
<dbReference type="Pfam" id="PF00227">
    <property type="entry name" value="Proteasome"/>
    <property type="match status" value="1"/>
</dbReference>
<dbReference type="Pfam" id="PF10584">
    <property type="entry name" value="Proteasome_A_N"/>
    <property type="match status" value="1"/>
</dbReference>
<dbReference type="SMART" id="SM00948">
    <property type="entry name" value="Proteasome_A_N"/>
    <property type="match status" value="1"/>
</dbReference>
<dbReference type="SUPFAM" id="SSF56235">
    <property type="entry name" value="N-terminal nucleophile aminohydrolases (Ntn hydrolases)"/>
    <property type="match status" value="1"/>
</dbReference>
<dbReference type="PROSITE" id="PS00388">
    <property type="entry name" value="PROTEASOME_ALPHA_1"/>
    <property type="match status" value="1"/>
</dbReference>
<dbReference type="PROSITE" id="PS51475">
    <property type="entry name" value="PROTEASOME_ALPHA_2"/>
    <property type="match status" value="1"/>
</dbReference>
<reference key="1">
    <citation type="journal article" date="1997" name="FEBS Lett.">
        <title>The 20S proteasome gene family in Arabidopsis thaliana.</title>
        <authorList>
            <person name="Parmentier Y."/>
            <person name="Bouchez D."/>
            <person name="Fleck J."/>
            <person name="Genschik P."/>
        </authorList>
    </citation>
    <scope>NUCLEOTIDE SEQUENCE [MRNA]</scope>
    <source>
        <strain>cv. Columbia</strain>
    </source>
</reference>
<reference key="2">
    <citation type="journal article" date="1998" name="Genetics">
        <title>Molecular organization of the 20S proteasome gene family from Arabidopsis thaliana.</title>
        <authorList>
            <person name="Fu H."/>
            <person name="Doelling J.H."/>
            <person name="Arendt C.S."/>
            <person name="Hochstrasser M."/>
            <person name="Vierstra R.D."/>
        </authorList>
    </citation>
    <scope>NUCLEOTIDE SEQUENCE [MRNA]</scope>
    <scope>TISSUE SPECIFICITY</scope>
    <scope>GENE FAMILY</scope>
    <scope>NOMENCLATURE</scope>
    <source>
        <strain>cv. Columbia</strain>
    </source>
</reference>
<reference key="3">
    <citation type="journal article" date="2000" name="DNA Res.">
        <title>Structural analysis of Arabidopsis thaliana chromosome 3. II. Sequence features of the 4,251,695 bp regions covered by 90 P1, TAC and BAC clones.</title>
        <authorList>
            <person name="Kaneko T."/>
            <person name="Katoh T."/>
            <person name="Sato S."/>
            <person name="Nakamura Y."/>
            <person name="Asamizu E."/>
            <person name="Tabata S."/>
        </authorList>
    </citation>
    <scope>NUCLEOTIDE SEQUENCE [LARGE SCALE GENOMIC DNA]</scope>
    <source>
        <strain>cv. Columbia</strain>
    </source>
</reference>
<reference key="4">
    <citation type="journal article" date="2017" name="Plant J.">
        <title>Araport11: a complete reannotation of the Arabidopsis thaliana reference genome.</title>
        <authorList>
            <person name="Cheng C.Y."/>
            <person name="Krishnakumar V."/>
            <person name="Chan A.P."/>
            <person name="Thibaud-Nissen F."/>
            <person name="Schobel S."/>
            <person name="Town C.D."/>
        </authorList>
    </citation>
    <scope>GENOME REANNOTATION</scope>
    <source>
        <strain>cv. Columbia</strain>
    </source>
</reference>
<reference key="5">
    <citation type="journal article" date="2003" name="Science">
        <title>Empirical analysis of transcriptional activity in the Arabidopsis genome.</title>
        <authorList>
            <person name="Yamada K."/>
            <person name="Lim J."/>
            <person name="Dale J.M."/>
            <person name="Chen H."/>
            <person name="Shinn P."/>
            <person name="Palm C.J."/>
            <person name="Southwick A.M."/>
            <person name="Wu H.C."/>
            <person name="Kim C.J."/>
            <person name="Nguyen M."/>
            <person name="Pham P.K."/>
            <person name="Cheuk R.F."/>
            <person name="Karlin-Newmann G."/>
            <person name="Liu S.X."/>
            <person name="Lam B."/>
            <person name="Sakano H."/>
            <person name="Wu T."/>
            <person name="Yu G."/>
            <person name="Miranda M."/>
            <person name="Quach H.L."/>
            <person name="Tripp M."/>
            <person name="Chang C.H."/>
            <person name="Lee J.M."/>
            <person name="Toriumi M.J."/>
            <person name="Chan M.M."/>
            <person name="Tang C.C."/>
            <person name="Onodera C.S."/>
            <person name="Deng J.M."/>
            <person name="Akiyama K."/>
            <person name="Ansari Y."/>
            <person name="Arakawa T."/>
            <person name="Banh J."/>
            <person name="Banno F."/>
            <person name="Bowser L."/>
            <person name="Brooks S.Y."/>
            <person name="Carninci P."/>
            <person name="Chao Q."/>
            <person name="Choy N."/>
            <person name="Enju A."/>
            <person name="Goldsmith A.D."/>
            <person name="Gurjal M."/>
            <person name="Hansen N.F."/>
            <person name="Hayashizaki Y."/>
            <person name="Johnson-Hopson C."/>
            <person name="Hsuan V.W."/>
            <person name="Iida K."/>
            <person name="Karnes M."/>
            <person name="Khan S."/>
            <person name="Koesema E."/>
            <person name="Ishida J."/>
            <person name="Jiang P.X."/>
            <person name="Jones T."/>
            <person name="Kawai J."/>
            <person name="Kamiya A."/>
            <person name="Meyers C."/>
            <person name="Nakajima M."/>
            <person name="Narusaka M."/>
            <person name="Seki M."/>
            <person name="Sakurai T."/>
            <person name="Satou M."/>
            <person name="Tamse R."/>
            <person name="Vaysberg M."/>
            <person name="Wallender E.K."/>
            <person name="Wong C."/>
            <person name="Yamamura Y."/>
            <person name="Yuan S."/>
            <person name="Shinozaki K."/>
            <person name="Davis R.W."/>
            <person name="Theologis A."/>
            <person name="Ecker J.R."/>
        </authorList>
    </citation>
    <scope>NUCLEOTIDE SEQUENCE [LARGE SCALE MRNA]</scope>
    <source>
        <strain>cv. Columbia</strain>
    </source>
</reference>
<reference key="6">
    <citation type="submission" date="2002-03" db="EMBL/GenBank/DDBJ databases">
        <title>Full-length cDNA from Arabidopsis thaliana.</title>
        <authorList>
            <person name="Brover V.V."/>
            <person name="Troukhan M.E."/>
            <person name="Alexandrov N.A."/>
            <person name="Lu Y.-P."/>
            <person name="Flavell R.B."/>
            <person name="Feldmann K.A."/>
        </authorList>
    </citation>
    <scope>NUCLEOTIDE SEQUENCE [LARGE SCALE MRNA]</scope>
</reference>
<reference key="7">
    <citation type="journal article" date="1999" name="Mol. Biol. Rep.">
        <title>Structure and functional analyses of the 26S proteasome subunits from plants.</title>
        <authorList>
            <person name="Fu H."/>
            <person name="Girod P.-A."/>
            <person name="Doelling J.H."/>
            <person name="van Nocker S."/>
            <person name="Hochstrasser M."/>
            <person name="Finley D."/>
            <person name="Vierstra R.D."/>
        </authorList>
    </citation>
    <scope>SUBUNIT</scope>
</reference>
<reference key="8">
    <citation type="journal article" date="2004" name="J. Biol. Chem.">
        <title>Purification of the Arabidopsis 26 S proteasome: biochemical and molecular analyses revealed the presence of multiple isoforms.</title>
        <authorList>
            <person name="Yang P."/>
            <person name="Fu H."/>
            <person name="Walker J."/>
            <person name="Papa C.M."/>
            <person name="Smalle J."/>
            <person name="Ju Y.-M."/>
            <person name="Vierstra R.D."/>
        </authorList>
    </citation>
    <scope>SUBUNIT</scope>
    <scope>IDENTIFICATION BY MASS SPECTROMETRY</scope>
</reference>
<reference key="9">
    <citation type="journal article" date="2010" name="J. Biol. Chem.">
        <title>Affinity purification of the Arabidopsis 26 S proteasome reveals a diverse array of plant proteolytic complexes.</title>
        <authorList>
            <person name="Book A.J."/>
            <person name="Gladman N.P."/>
            <person name="Lee S.S."/>
            <person name="Scalf M."/>
            <person name="Smith L.M."/>
            <person name="Vierstra R.D."/>
        </authorList>
    </citation>
    <scope>IDENTIFICATION BY MASS SPECTROMETRY</scope>
    <scope>CHARACTERIZATION OF THE 26S PROTEASOME COMPLEX</scope>
    <scope>SUBUNIT</scope>
    <scope>UBIQUITINATION AT LYS-40</scope>
</reference>